<reference key="1">
    <citation type="journal article" date="2004" name="Nature">
        <title>Genome evolution in yeasts.</title>
        <authorList>
            <person name="Dujon B."/>
            <person name="Sherman D."/>
            <person name="Fischer G."/>
            <person name="Durrens P."/>
            <person name="Casaregola S."/>
            <person name="Lafontaine I."/>
            <person name="de Montigny J."/>
            <person name="Marck C."/>
            <person name="Neuveglise C."/>
            <person name="Talla E."/>
            <person name="Goffard N."/>
            <person name="Frangeul L."/>
            <person name="Aigle M."/>
            <person name="Anthouard V."/>
            <person name="Babour A."/>
            <person name="Barbe V."/>
            <person name="Barnay S."/>
            <person name="Blanchin S."/>
            <person name="Beckerich J.-M."/>
            <person name="Beyne E."/>
            <person name="Bleykasten C."/>
            <person name="Boisrame A."/>
            <person name="Boyer J."/>
            <person name="Cattolico L."/>
            <person name="Confanioleri F."/>
            <person name="de Daruvar A."/>
            <person name="Despons L."/>
            <person name="Fabre E."/>
            <person name="Fairhead C."/>
            <person name="Ferry-Dumazet H."/>
            <person name="Groppi A."/>
            <person name="Hantraye F."/>
            <person name="Hennequin C."/>
            <person name="Jauniaux N."/>
            <person name="Joyet P."/>
            <person name="Kachouri R."/>
            <person name="Kerrest A."/>
            <person name="Koszul R."/>
            <person name="Lemaire M."/>
            <person name="Lesur I."/>
            <person name="Ma L."/>
            <person name="Muller H."/>
            <person name="Nicaud J.-M."/>
            <person name="Nikolski M."/>
            <person name="Oztas S."/>
            <person name="Ozier-Kalogeropoulos O."/>
            <person name="Pellenz S."/>
            <person name="Potier S."/>
            <person name="Richard G.-F."/>
            <person name="Straub M.-L."/>
            <person name="Suleau A."/>
            <person name="Swennen D."/>
            <person name="Tekaia F."/>
            <person name="Wesolowski-Louvel M."/>
            <person name="Westhof E."/>
            <person name="Wirth B."/>
            <person name="Zeniou-Meyer M."/>
            <person name="Zivanovic Y."/>
            <person name="Bolotin-Fukuhara M."/>
            <person name="Thierry A."/>
            <person name="Bouchier C."/>
            <person name="Caudron B."/>
            <person name="Scarpelli C."/>
            <person name="Gaillardin C."/>
            <person name="Weissenbach J."/>
            <person name="Wincker P."/>
            <person name="Souciet J.-L."/>
        </authorList>
    </citation>
    <scope>NUCLEOTIDE SEQUENCE [LARGE SCALE GENOMIC DNA]</scope>
    <source>
        <strain>ATCC 8585 / CBS 2359 / DSM 70799 / NBRC 1267 / NRRL Y-1140 / WM37</strain>
    </source>
</reference>
<sequence>MNLYSYSRIIKFPGHNALVLKRLFHRPYQFKSVPDDIKNNLVTECECFVKRLNEKLPDKSQLDISLTLPNKVPEYHKHVLMLSKDPKGWKNWPSKLEMAHEYPHSMVGTLKSSLKDTRDGSGVLVNELALDGYTSSETHLKFLVIPDMKVYEVHRDRVSDFALFLGDGKQDSRKKLSFNDFLKGSDAVGQTAIHSSGSVANSIPNFQSEPFHSDIAMVCGHYLRDARCGELAPLLIAKLNSIKPNLKTGIVSHFGGHKFAGNLIYYQFNGLKIHNDNETGKIDGLWLSKLLPQNLEFVFRHLDKDIILQDFYRGHMSTAAYT</sequence>
<gene>
    <name type="primary">AIM32</name>
    <name type="ordered locus">KLLA0A08140g</name>
</gene>
<protein>
    <recommendedName>
        <fullName>Altered inheritance of mitochondria protein 32</fullName>
    </recommendedName>
</protein>
<organism>
    <name type="scientific">Kluyveromyces lactis (strain ATCC 8585 / CBS 2359 / DSM 70799 / NBRC 1267 / NRRL Y-1140 / WM37)</name>
    <name type="common">Yeast</name>
    <name type="synonym">Candida sphaerica</name>
    <dbReference type="NCBI Taxonomy" id="284590"/>
    <lineage>
        <taxon>Eukaryota</taxon>
        <taxon>Fungi</taxon>
        <taxon>Dikarya</taxon>
        <taxon>Ascomycota</taxon>
        <taxon>Saccharomycotina</taxon>
        <taxon>Saccharomycetes</taxon>
        <taxon>Saccharomycetales</taxon>
        <taxon>Saccharomycetaceae</taxon>
        <taxon>Kluyveromyces</taxon>
    </lineage>
</organism>
<dbReference type="EMBL" id="CR382121">
    <property type="protein sequence ID" value="CAH02950.1"/>
    <property type="molecule type" value="Genomic_DNA"/>
</dbReference>
<dbReference type="RefSeq" id="XP_451362.1">
    <property type="nucleotide sequence ID" value="XM_451362.1"/>
</dbReference>
<dbReference type="FunCoup" id="Q6CXH7">
    <property type="interactions" value="30"/>
</dbReference>
<dbReference type="STRING" id="284590.Q6CXH7"/>
<dbReference type="PaxDb" id="284590-Q6CXH7"/>
<dbReference type="KEGG" id="kla:KLLA0_A08140g"/>
<dbReference type="eggNOG" id="ENOG502QS3W">
    <property type="taxonomic scope" value="Eukaryota"/>
</dbReference>
<dbReference type="HOGENOM" id="CLU_044499_1_0_1"/>
<dbReference type="InParanoid" id="Q6CXH7"/>
<dbReference type="OMA" id="IPEMKIY"/>
<dbReference type="Proteomes" id="UP000000598">
    <property type="component" value="Chromosome A"/>
</dbReference>
<dbReference type="CDD" id="cd03062">
    <property type="entry name" value="TRX_Fd_Sucrase"/>
    <property type="match status" value="1"/>
</dbReference>
<dbReference type="InterPro" id="IPR009737">
    <property type="entry name" value="Aim32/Apd1-like"/>
</dbReference>
<dbReference type="PANTHER" id="PTHR31902">
    <property type="entry name" value="ACTIN PATCHES DISTAL PROTEIN 1"/>
    <property type="match status" value="1"/>
</dbReference>
<dbReference type="PANTHER" id="PTHR31902:SF7">
    <property type="entry name" value="ALTERED INHERITANCE OF MITOCHONDRIA PROTEIN 32"/>
    <property type="match status" value="1"/>
</dbReference>
<dbReference type="Pfam" id="PF06999">
    <property type="entry name" value="Suc_Fer-like"/>
    <property type="match status" value="1"/>
</dbReference>
<evidence type="ECO:0000305" key="1"/>
<name>AIM32_KLULA</name>
<feature type="chain" id="PRO_0000399697" description="Altered inheritance of mitochondria protein 32">
    <location>
        <begin position="1"/>
        <end position="322"/>
    </location>
</feature>
<proteinExistence type="inferred from homology"/>
<keyword id="KW-1185">Reference proteome</keyword>
<accession>Q6CXH7</accession>
<comment type="similarity">
    <text evidence="1">Belongs to the AIM32 family.</text>
</comment>